<protein>
    <recommendedName>
        <fullName evidence="1">Integration host factor subunit alpha</fullName>
        <shortName evidence="1">IHF-alpha</shortName>
    </recommendedName>
</protein>
<proteinExistence type="inferred from homology"/>
<organism>
    <name type="scientific">Salmonella choleraesuis (strain SC-B67)</name>
    <dbReference type="NCBI Taxonomy" id="321314"/>
    <lineage>
        <taxon>Bacteria</taxon>
        <taxon>Pseudomonadati</taxon>
        <taxon>Pseudomonadota</taxon>
        <taxon>Gammaproteobacteria</taxon>
        <taxon>Enterobacterales</taxon>
        <taxon>Enterobacteriaceae</taxon>
        <taxon>Salmonella</taxon>
    </lineage>
</organism>
<sequence>MALTKAEMSEYLFDKLGLSKRDAKELVELFFEEIRRALENGEQVKLSGFGNFDLRDKNQRPGRNPKTGEDIPITARRVVTFRPGQKLKSRVENASPKEE</sequence>
<evidence type="ECO:0000255" key="1">
    <source>
        <dbReference type="HAMAP-Rule" id="MF_00380"/>
    </source>
</evidence>
<evidence type="ECO:0000256" key="2">
    <source>
        <dbReference type="SAM" id="MobiDB-lite"/>
    </source>
</evidence>
<reference key="1">
    <citation type="journal article" date="2005" name="Nucleic Acids Res.">
        <title>The genome sequence of Salmonella enterica serovar Choleraesuis, a highly invasive and resistant zoonotic pathogen.</title>
        <authorList>
            <person name="Chiu C.-H."/>
            <person name="Tang P."/>
            <person name="Chu C."/>
            <person name="Hu S."/>
            <person name="Bao Q."/>
            <person name="Yu J."/>
            <person name="Chou Y.-Y."/>
            <person name="Wang H.-S."/>
            <person name="Lee Y.-S."/>
        </authorList>
    </citation>
    <scope>NUCLEOTIDE SEQUENCE [LARGE SCALE GENOMIC DNA]</scope>
    <source>
        <strain>SC-B67</strain>
    </source>
</reference>
<comment type="function">
    <text evidence="1">This protein is one of the two subunits of integration host factor, a specific DNA-binding protein that functions in genetic recombination as well as in transcriptional and translational control.</text>
</comment>
<comment type="subunit">
    <text evidence="1">Heterodimer of an alpha and a beta chain.</text>
</comment>
<comment type="similarity">
    <text evidence="1">Belongs to the bacterial histone-like protein family.</text>
</comment>
<name>IHFA_SALCH</name>
<accession>Q57PU7</accession>
<gene>
    <name evidence="1" type="primary">ihfA</name>
    <name evidence="1" type="synonym">himA</name>
    <name type="ordered locus">SCH_1358</name>
</gene>
<feature type="chain" id="PRO_0000277771" description="Integration host factor subunit alpha">
    <location>
        <begin position="1"/>
        <end position="99"/>
    </location>
</feature>
<feature type="region of interest" description="Disordered" evidence="2">
    <location>
        <begin position="49"/>
        <end position="75"/>
    </location>
</feature>
<keyword id="KW-0233">DNA recombination</keyword>
<keyword id="KW-0238">DNA-binding</keyword>
<keyword id="KW-0804">Transcription</keyword>
<keyword id="KW-0805">Transcription regulation</keyword>
<keyword id="KW-0810">Translation regulation</keyword>
<dbReference type="EMBL" id="AE017220">
    <property type="protein sequence ID" value="AAX65264.1"/>
    <property type="molecule type" value="Genomic_DNA"/>
</dbReference>
<dbReference type="RefSeq" id="WP_001229266.1">
    <property type="nucleotide sequence ID" value="NC_006905.1"/>
</dbReference>
<dbReference type="SMR" id="Q57PU7"/>
<dbReference type="GeneID" id="92828695"/>
<dbReference type="KEGG" id="sec:SCH_1358"/>
<dbReference type="HOGENOM" id="CLU_105066_1_3_6"/>
<dbReference type="Proteomes" id="UP000000538">
    <property type="component" value="Chromosome"/>
</dbReference>
<dbReference type="GO" id="GO:0005829">
    <property type="term" value="C:cytosol"/>
    <property type="evidence" value="ECO:0007669"/>
    <property type="project" value="TreeGrafter"/>
</dbReference>
<dbReference type="GO" id="GO:0003677">
    <property type="term" value="F:DNA binding"/>
    <property type="evidence" value="ECO:0007669"/>
    <property type="project" value="UniProtKB-UniRule"/>
</dbReference>
<dbReference type="GO" id="GO:0030527">
    <property type="term" value="F:structural constituent of chromatin"/>
    <property type="evidence" value="ECO:0007669"/>
    <property type="project" value="InterPro"/>
</dbReference>
<dbReference type="GO" id="GO:0006310">
    <property type="term" value="P:DNA recombination"/>
    <property type="evidence" value="ECO:0007669"/>
    <property type="project" value="UniProtKB-UniRule"/>
</dbReference>
<dbReference type="GO" id="GO:0009893">
    <property type="term" value="P:positive regulation of metabolic process"/>
    <property type="evidence" value="ECO:0007669"/>
    <property type="project" value="UniProtKB-ARBA"/>
</dbReference>
<dbReference type="GO" id="GO:0006355">
    <property type="term" value="P:regulation of DNA-templated transcription"/>
    <property type="evidence" value="ECO:0007669"/>
    <property type="project" value="UniProtKB-UniRule"/>
</dbReference>
<dbReference type="GO" id="GO:0006417">
    <property type="term" value="P:regulation of translation"/>
    <property type="evidence" value="ECO:0007669"/>
    <property type="project" value="UniProtKB-UniRule"/>
</dbReference>
<dbReference type="CDD" id="cd13835">
    <property type="entry name" value="IHF_A"/>
    <property type="match status" value="1"/>
</dbReference>
<dbReference type="FunFam" id="4.10.520.10:FF:000002">
    <property type="entry name" value="Integration host factor subunit alpha"/>
    <property type="match status" value="1"/>
</dbReference>
<dbReference type="Gene3D" id="4.10.520.10">
    <property type="entry name" value="IHF-like DNA-binding proteins"/>
    <property type="match status" value="1"/>
</dbReference>
<dbReference type="HAMAP" id="MF_00380">
    <property type="entry name" value="IHF_alpha"/>
    <property type="match status" value="1"/>
</dbReference>
<dbReference type="InterPro" id="IPR000119">
    <property type="entry name" value="Hist_DNA-bd"/>
</dbReference>
<dbReference type="InterPro" id="IPR020816">
    <property type="entry name" value="Histone-like_DNA-bd_CS"/>
</dbReference>
<dbReference type="InterPro" id="IPR010992">
    <property type="entry name" value="IHF-like_DNA-bd_dom_sf"/>
</dbReference>
<dbReference type="InterPro" id="IPR005684">
    <property type="entry name" value="IHF_alpha"/>
</dbReference>
<dbReference type="NCBIfam" id="TIGR00987">
    <property type="entry name" value="himA"/>
    <property type="match status" value="1"/>
</dbReference>
<dbReference type="NCBIfam" id="NF001401">
    <property type="entry name" value="PRK00285.1"/>
    <property type="match status" value="1"/>
</dbReference>
<dbReference type="PANTHER" id="PTHR33175">
    <property type="entry name" value="DNA-BINDING PROTEIN HU"/>
    <property type="match status" value="1"/>
</dbReference>
<dbReference type="PANTHER" id="PTHR33175:SF2">
    <property type="entry name" value="INTEGRATION HOST FACTOR SUBUNIT ALPHA"/>
    <property type="match status" value="1"/>
</dbReference>
<dbReference type="Pfam" id="PF00216">
    <property type="entry name" value="Bac_DNA_binding"/>
    <property type="match status" value="1"/>
</dbReference>
<dbReference type="PRINTS" id="PR01727">
    <property type="entry name" value="DNABINDINGHU"/>
</dbReference>
<dbReference type="SMART" id="SM00411">
    <property type="entry name" value="BHL"/>
    <property type="match status" value="1"/>
</dbReference>
<dbReference type="SUPFAM" id="SSF47729">
    <property type="entry name" value="IHF-like DNA-binding proteins"/>
    <property type="match status" value="1"/>
</dbReference>
<dbReference type="PROSITE" id="PS00045">
    <property type="entry name" value="HISTONE_LIKE"/>
    <property type="match status" value="1"/>
</dbReference>